<comment type="function">
    <text evidence="1">The UvrABC repair system catalyzes the recognition and processing of DNA lesions. UvrC both incises the 5' and 3' sides of the lesion. The N-terminal half is responsible for the 3' incision and the C-terminal half is responsible for the 5' incision.</text>
</comment>
<comment type="subunit">
    <text evidence="1">Interacts with UvrB in an incision complex.</text>
</comment>
<comment type="subcellular location">
    <subcellularLocation>
        <location evidence="1">Cytoplasm</location>
    </subcellularLocation>
</comment>
<comment type="similarity">
    <text evidence="1">Belongs to the UvrC family.</text>
</comment>
<organism>
    <name type="scientific">Synechococcus sp. (strain JA-2-3B'a(2-13))</name>
    <name type="common">Cyanobacteria bacterium Yellowstone B-Prime</name>
    <dbReference type="NCBI Taxonomy" id="321332"/>
    <lineage>
        <taxon>Bacteria</taxon>
        <taxon>Bacillati</taxon>
        <taxon>Cyanobacteriota</taxon>
        <taxon>Cyanophyceae</taxon>
        <taxon>Synechococcales</taxon>
        <taxon>Synechococcaceae</taxon>
        <taxon>Synechococcus</taxon>
    </lineage>
</organism>
<sequence length="623" mass="71459">MTVPLIHSRDVLESRLKEIPAEPGVYLMRDATDQILYVGKSKKLRSRVRSYFRFTSDLSPRIQRMVAQVCEIEFIVTDNESEALALEDNLIKTHQPPYNVLLKDDKKYPYLCITWSEPYPQLYITRHRRLDRNQDKYYGPYTDVGLLRHTLGLVKRIFPLRQRPKPLYKDRTCLNYDIGRCPGVCQGLISPEEYRKTLTQVAMIFQGQTDELIRELQEKMIQAAEQENYEAAARYRDQIRGLEQLGESQKVSLPNSTVSRDALALAMNDSRACIQLFQVRAGKLVGRLGFVAENRGDDPGLILQRALQEHYQYCDPVEIPSEILTQYELPDHDFLESWLSQKKGRKVSLVAPQRQSKAELIELVERNAQLELTRTQRLADRDAAALERLAEVLDLPDVPRRLEAYDISHIQGSDAVASQVVFIDGLPAKQHYRRYKIRNPEVRPGHSDDFASHAEVARRRFSKMTPEDQPDLVLIDGGKGQLSAVMAVLADLGLDHLPVIALAKREEEIFLPGNPVPLRLPAQDPARLLLQRLRDEAHRFALAFHRQQRKARQHASTLDEIPGLGKYRQKLLMEEFRSIARIQVASEDQLAQVPGIGPKIARQIYRYFHPETQAESPETAQVE</sequence>
<accession>Q2JM21</accession>
<gene>
    <name evidence="1" type="primary">uvrC</name>
    <name type="ordered locus">CYB_1251</name>
</gene>
<evidence type="ECO:0000255" key="1">
    <source>
        <dbReference type="HAMAP-Rule" id="MF_00203"/>
    </source>
</evidence>
<feature type="chain" id="PRO_0000264965" description="UvrABC system protein C">
    <location>
        <begin position="1"/>
        <end position="623"/>
    </location>
</feature>
<feature type="domain" description="GIY-YIG" evidence="1">
    <location>
        <begin position="21"/>
        <end position="100"/>
    </location>
</feature>
<feature type="domain" description="UVR" evidence="1">
    <location>
        <begin position="210"/>
        <end position="245"/>
    </location>
</feature>
<protein>
    <recommendedName>
        <fullName evidence="1">UvrABC system protein C</fullName>
        <shortName evidence="1">Protein UvrC</shortName>
    </recommendedName>
    <alternativeName>
        <fullName evidence="1">Excinuclease ABC subunit C</fullName>
    </alternativeName>
</protein>
<reference key="1">
    <citation type="journal article" date="2007" name="ISME J.">
        <title>Population level functional diversity in a microbial community revealed by comparative genomic and metagenomic analyses.</title>
        <authorList>
            <person name="Bhaya D."/>
            <person name="Grossman A.R."/>
            <person name="Steunou A.-S."/>
            <person name="Khuri N."/>
            <person name="Cohan F.M."/>
            <person name="Hamamura N."/>
            <person name="Melendrez M.C."/>
            <person name="Bateson M.M."/>
            <person name="Ward D.M."/>
            <person name="Heidelberg J.F."/>
        </authorList>
    </citation>
    <scope>NUCLEOTIDE SEQUENCE [LARGE SCALE GENOMIC DNA]</scope>
    <source>
        <strain>JA-2-3B'a(2-13)</strain>
    </source>
</reference>
<proteinExistence type="inferred from homology"/>
<keyword id="KW-0963">Cytoplasm</keyword>
<keyword id="KW-0227">DNA damage</keyword>
<keyword id="KW-0228">DNA excision</keyword>
<keyword id="KW-0234">DNA repair</keyword>
<keyword id="KW-0267">Excision nuclease</keyword>
<keyword id="KW-1185">Reference proteome</keyword>
<keyword id="KW-0742">SOS response</keyword>
<dbReference type="EMBL" id="CP000240">
    <property type="protein sequence ID" value="ABD02226.1"/>
    <property type="molecule type" value="Genomic_DNA"/>
</dbReference>
<dbReference type="RefSeq" id="WP_011432878.1">
    <property type="nucleotide sequence ID" value="NC_007776.1"/>
</dbReference>
<dbReference type="SMR" id="Q2JM21"/>
<dbReference type="STRING" id="321332.CYB_1251"/>
<dbReference type="KEGG" id="cyb:CYB_1251"/>
<dbReference type="eggNOG" id="COG0322">
    <property type="taxonomic scope" value="Bacteria"/>
</dbReference>
<dbReference type="HOGENOM" id="CLU_014841_3_2_3"/>
<dbReference type="OrthoDB" id="9804933at2"/>
<dbReference type="Proteomes" id="UP000001938">
    <property type="component" value="Chromosome"/>
</dbReference>
<dbReference type="GO" id="GO:0005737">
    <property type="term" value="C:cytoplasm"/>
    <property type="evidence" value="ECO:0007669"/>
    <property type="project" value="UniProtKB-SubCell"/>
</dbReference>
<dbReference type="GO" id="GO:0009380">
    <property type="term" value="C:excinuclease repair complex"/>
    <property type="evidence" value="ECO:0007669"/>
    <property type="project" value="InterPro"/>
</dbReference>
<dbReference type="GO" id="GO:0003677">
    <property type="term" value="F:DNA binding"/>
    <property type="evidence" value="ECO:0007669"/>
    <property type="project" value="UniProtKB-UniRule"/>
</dbReference>
<dbReference type="GO" id="GO:0009381">
    <property type="term" value="F:excinuclease ABC activity"/>
    <property type="evidence" value="ECO:0007669"/>
    <property type="project" value="UniProtKB-UniRule"/>
</dbReference>
<dbReference type="GO" id="GO:0006289">
    <property type="term" value="P:nucleotide-excision repair"/>
    <property type="evidence" value="ECO:0007669"/>
    <property type="project" value="UniProtKB-UniRule"/>
</dbReference>
<dbReference type="GO" id="GO:0009432">
    <property type="term" value="P:SOS response"/>
    <property type="evidence" value="ECO:0007669"/>
    <property type="project" value="UniProtKB-UniRule"/>
</dbReference>
<dbReference type="CDD" id="cd10434">
    <property type="entry name" value="GIY-YIG_UvrC_Cho"/>
    <property type="match status" value="1"/>
</dbReference>
<dbReference type="FunFam" id="3.40.1440.10:FF:000001">
    <property type="entry name" value="UvrABC system protein C"/>
    <property type="match status" value="1"/>
</dbReference>
<dbReference type="Gene3D" id="1.10.150.20">
    <property type="entry name" value="5' to 3' exonuclease, C-terminal subdomain"/>
    <property type="match status" value="1"/>
</dbReference>
<dbReference type="Gene3D" id="3.40.1440.10">
    <property type="entry name" value="GIY-YIG endonuclease"/>
    <property type="match status" value="1"/>
</dbReference>
<dbReference type="Gene3D" id="4.10.860.10">
    <property type="entry name" value="UVR domain"/>
    <property type="match status" value="1"/>
</dbReference>
<dbReference type="Gene3D" id="3.30.420.340">
    <property type="entry name" value="UvrC, RNAse H endonuclease domain"/>
    <property type="match status" value="1"/>
</dbReference>
<dbReference type="HAMAP" id="MF_00203">
    <property type="entry name" value="UvrC"/>
    <property type="match status" value="1"/>
</dbReference>
<dbReference type="InterPro" id="IPR041663">
    <property type="entry name" value="DisA/LigA_HHH"/>
</dbReference>
<dbReference type="InterPro" id="IPR000305">
    <property type="entry name" value="GIY-YIG_endonuc"/>
</dbReference>
<dbReference type="InterPro" id="IPR035901">
    <property type="entry name" value="GIY-YIG_endonuc_sf"/>
</dbReference>
<dbReference type="InterPro" id="IPR047296">
    <property type="entry name" value="GIY-YIG_UvrC_Cho"/>
</dbReference>
<dbReference type="InterPro" id="IPR003583">
    <property type="entry name" value="Hlx-hairpin-Hlx_DNA-bd_motif"/>
</dbReference>
<dbReference type="InterPro" id="IPR010994">
    <property type="entry name" value="RuvA_2-like"/>
</dbReference>
<dbReference type="InterPro" id="IPR001943">
    <property type="entry name" value="UVR_dom"/>
</dbReference>
<dbReference type="InterPro" id="IPR036876">
    <property type="entry name" value="UVR_dom_sf"/>
</dbReference>
<dbReference type="InterPro" id="IPR050066">
    <property type="entry name" value="UvrABC_protein_C"/>
</dbReference>
<dbReference type="InterPro" id="IPR004791">
    <property type="entry name" value="UvrC"/>
</dbReference>
<dbReference type="InterPro" id="IPR001162">
    <property type="entry name" value="UvrC_RNase_H_dom"/>
</dbReference>
<dbReference type="InterPro" id="IPR038476">
    <property type="entry name" value="UvrC_RNase_H_dom_sf"/>
</dbReference>
<dbReference type="NCBIfam" id="NF001824">
    <property type="entry name" value="PRK00558.1-5"/>
    <property type="match status" value="1"/>
</dbReference>
<dbReference type="NCBIfam" id="TIGR00194">
    <property type="entry name" value="uvrC"/>
    <property type="match status" value="1"/>
</dbReference>
<dbReference type="PANTHER" id="PTHR30562:SF1">
    <property type="entry name" value="UVRABC SYSTEM PROTEIN C"/>
    <property type="match status" value="1"/>
</dbReference>
<dbReference type="PANTHER" id="PTHR30562">
    <property type="entry name" value="UVRC/OXIDOREDUCTASE"/>
    <property type="match status" value="1"/>
</dbReference>
<dbReference type="Pfam" id="PF01541">
    <property type="entry name" value="GIY-YIG"/>
    <property type="match status" value="1"/>
</dbReference>
<dbReference type="Pfam" id="PF12826">
    <property type="entry name" value="HHH_2"/>
    <property type="match status" value="1"/>
</dbReference>
<dbReference type="Pfam" id="PF02151">
    <property type="entry name" value="UVR"/>
    <property type="match status" value="1"/>
</dbReference>
<dbReference type="Pfam" id="PF22920">
    <property type="entry name" value="UvrC_RNaseH"/>
    <property type="match status" value="1"/>
</dbReference>
<dbReference type="Pfam" id="PF08459">
    <property type="entry name" value="UvrC_RNaseH_dom"/>
    <property type="match status" value="1"/>
</dbReference>
<dbReference type="SMART" id="SM00465">
    <property type="entry name" value="GIYc"/>
    <property type="match status" value="1"/>
</dbReference>
<dbReference type="SMART" id="SM00278">
    <property type="entry name" value="HhH1"/>
    <property type="match status" value="2"/>
</dbReference>
<dbReference type="SUPFAM" id="SSF46600">
    <property type="entry name" value="C-terminal UvrC-binding domain of UvrB"/>
    <property type="match status" value="1"/>
</dbReference>
<dbReference type="SUPFAM" id="SSF82771">
    <property type="entry name" value="GIY-YIG endonuclease"/>
    <property type="match status" value="1"/>
</dbReference>
<dbReference type="SUPFAM" id="SSF47781">
    <property type="entry name" value="RuvA domain 2-like"/>
    <property type="match status" value="1"/>
</dbReference>
<dbReference type="PROSITE" id="PS50164">
    <property type="entry name" value="GIY_YIG"/>
    <property type="match status" value="1"/>
</dbReference>
<dbReference type="PROSITE" id="PS50151">
    <property type="entry name" value="UVR"/>
    <property type="match status" value="1"/>
</dbReference>
<dbReference type="PROSITE" id="PS50165">
    <property type="entry name" value="UVRC"/>
    <property type="match status" value="1"/>
</dbReference>
<name>UVRC_SYNJB</name>